<keyword id="KW-0007">Acetylation</keyword>
<keyword id="KW-1003">Cell membrane</keyword>
<keyword id="KW-0256">Endoplasmic reticulum</keyword>
<keyword id="KW-0472">Membrane</keyword>
<keyword id="KW-1185">Reference proteome</keyword>
<keyword id="KW-0812">Transmembrane</keyword>
<keyword id="KW-1133">Transmembrane helix</keyword>
<evidence type="ECO:0000250" key="1">
    <source>
        <dbReference type="UniProtKB" id="O82352"/>
    </source>
</evidence>
<evidence type="ECO:0000250" key="2">
    <source>
        <dbReference type="UniProtKB" id="Q9SH59"/>
    </source>
</evidence>
<evidence type="ECO:0000255" key="3"/>
<evidence type="ECO:0000255" key="4">
    <source>
        <dbReference type="PROSITE-ProRule" id="PRU00170"/>
    </source>
</evidence>
<evidence type="ECO:0000256" key="5">
    <source>
        <dbReference type="SAM" id="MobiDB-lite"/>
    </source>
</evidence>
<evidence type="ECO:0000269" key="6">
    <source>
    </source>
</evidence>
<evidence type="ECO:0000269" key="7">
    <source>
    </source>
</evidence>
<gene>
    <name type="primary">RTNLB1</name>
    <name type="synonym">BTI1</name>
    <name type="ordered locus">At4g23630</name>
    <name type="ORF">F9D16.100</name>
</gene>
<protein>
    <recommendedName>
        <fullName>Reticulon-like protein B1</fullName>
        <shortName>AtRTNLB1</shortName>
    </recommendedName>
    <alternativeName>
        <fullName>VirB2-interacting protein 1</fullName>
    </alternativeName>
</protein>
<accession>Q9SUR3</accession>
<comment type="function">
    <text evidence="7">Plays a role in the Agrobacterium-mediated plant transformation via its interaction with VirB2, the major component of the T-pilus.</text>
</comment>
<comment type="subunit">
    <text evidence="7">Interacts with VirB2.</text>
</comment>
<comment type="subcellular location">
    <subcellularLocation>
        <location evidence="2">Endoplasmic reticulum membrane</location>
        <topology evidence="3">Multi-pass membrane protein</topology>
    </subcellularLocation>
    <subcellularLocation>
        <location evidence="6">Cell membrane</location>
        <topology evidence="6">Multi-pass membrane protein</topology>
    </subcellularLocation>
</comment>
<comment type="tissue specificity">
    <text evidence="7">Predominantly expressed in root tissues.</text>
</comment>
<comment type="induction">
    <text evidence="7">Up-regulated after Agrobacterium infection.</text>
</comment>
<comment type="disruption phenotype">
    <text evidence="7">Shows reduced levels of Agrobacterium-mediated root transformation.</text>
</comment>
<sequence length="275" mass="30529">MAEEHKHDESVIAPEPAVEVVERESLMDKISEKIHHGGDSSSSSSSSDDEDEKKKTKKPSSPSSSMKSKVYRLFGREQPVHKVLGGGKPADIFMWKNKKMSGGVLGGATAAWVVFELMEYHLLTLLCHVMIVVLAVLFLWSNATMFINKSPPKIPEVHIPEEPILQLASGLRIEINRGFSSLREIASGRDLKKFLIAIAGLWVLSILGGCFNFLTLAYIALVLLFTVPLAYDKYEDKVDPLGEKAMIELKKQYAVLDEKVLSKIPLGPLKNKKKD</sequence>
<reference key="1">
    <citation type="journal article" date="1999" name="Nature">
        <title>Sequence and analysis of chromosome 4 of the plant Arabidopsis thaliana.</title>
        <authorList>
            <person name="Mayer K.F.X."/>
            <person name="Schueller C."/>
            <person name="Wambutt R."/>
            <person name="Murphy G."/>
            <person name="Volckaert G."/>
            <person name="Pohl T."/>
            <person name="Duesterhoeft A."/>
            <person name="Stiekema W."/>
            <person name="Entian K.-D."/>
            <person name="Terryn N."/>
            <person name="Harris B."/>
            <person name="Ansorge W."/>
            <person name="Brandt P."/>
            <person name="Grivell L.A."/>
            <person name="Rieger M."/>
            <person name="Weichselgartner M."/>
            <person name="de Simone V."/>
            <person name="Obermaier B."/>
            <person name="Mache R."/>
            <person name="Mueller M."/>
            <person name="Kreis M."/>
            <person name="Delseny M."/>
            <person name="Puigdomenech P."/>
            <person name="Watson M."/>
            <person name="Schmidtheini T."/>
            <person name="Reichert B."/>
            <person name="Portetelle D."/>
            <person name="Perez-Alonso M."/>
            <person name="Boutry M."/>
            <person name="Bancroft I."/>
            <person name="Vos P."/>
            <person name="Hoheisel J."/>
            <person name="Zimmermann W."/>
            <person name="Wedler H."/>
            <person name="Ridley P."/>
            <person name="Langham S.-A."/>
            <person name="McCullagh B."/>
            <person name="Bilham L."/>
            <person name="Robben J."/>
            <person name="van der Schueren J."/>
            <person name="Grymonprez B."/>
            <person name="Chuang Y.-J."/>
            <person name="Vandenbussche F."/>
            <person name="Braeken M."/>
            <person name="Weltjens I."/>
            <person name="Voet M."/>
            <person name="Bastiaens I."/>
            <person name="Aert R."/>
            <person name="Defoor E."/>
            <person name="Weitzenegger T."/>
            <person name="Bothe G."/>
            <person name="Ramsperger U."/>
            <person name="Hilbert H."/>
            <person name="Braun M."/>
            <person name="Holzer E."/>
            <person name="Brandt A."/>
            <person name="Peters S."/>
            <person name="van Staveren M."/>
            <person name="Dirkse W."/>
            <person name="Mooijman P."/>
            <person name="Klein Lankhorst R."/>
            <person name="Rose M."/>
            <person name="Hauf J."/>
            <person name="Koetter P."/>
            <person name="Berneiser S."/>
            <person name="Hempel S."/>
            <person name="Feldpausch M."/>
            <person name="Lamberth S."/>
            <person name="Van den Daele H."/>
            <person name="De Keyser A."/>
            <person name="Buysshaert C."/>
            <person name="Gielen J."/>
            <person name="Villarroel R."/>
            <person name="De Clercq R."/>
            <person name="van Montagu M."/>
            <person name="Rogers J."/>
            <person name="Cronin A."/>
            <person name="Quail M.A."/>
            <person name="Bray-Allen S."/>
            <person name="Clark L."/>
            <person name="Doggett J."/>
            <person name="Hall S."/>
            <person name="Kay M."/>
            <person name="Lennard N."/>
            <person name="McLay K."/>
            <person name="Mayes R."/>
            <person name="Pettett A."/>
            <person name="Rajandream M.A."/>
            <person name="Lyne M."/>
            <person name="Benes V."/>
            <person name="Rechmann S."/>
            <person name="Borkova D."/>
            <person name="Bloecker H."/>
            <person name="Scharfe M."/>
            <person name="Grimm M."/>
            <person name="Loehnert T.-H."/>
            <person name="Dose S."/>
            <person name="de Haan M."/>
            <person name="Maarse A.C."/>
            <person name="Schaefer M."/>
            <person name="Mueller-Auer S."/>
            <person name="Gabel C."/>
            <person name="Fuchs M."/>
            <person name="Fartmann B."/>
            <person name="Granderath K."/>
            <person name="Dauner D."/>
            <person name="Herzl A."/>
            <person name="Neumann S."/>
            <person name="Argiriou A."/>
            <person name="Vitale D."/>
            <person name="Liguori R."/>
            <person name="Piravandi E."/>
            <person name="Massenet O."/>
            <person name="Quigley F."/>
            <person name="Clabauld G."/>
            <person name="Muendlein A."/>
            <person name="Felber R."/>
            <person name="Schnabl S."/>
            <person name="Hiller R."/>
            <person name="Schmidt W."/>
            <person name="Lecharny A."/>
            <person name="Aubourg S."/>
            <person name="Chefdor F."/>
            <person name="Cooke R."/>
            <person name="Berger C."/>
            <person name="Monfort A."/>
            <person name="Casacuberta E."/>
            <person name="Gibbons T."/>
            <person name="Weber N."/>
            <person name="Vandenbol M."/>
            <person name="Bargues M."/>
            <person name="Terol J."/>
            <person name="Torres A."/>
            <person name="Perez-Perez A."/>
            <person name="Purnelle B."/>
            <person name="Bent E."/>
            <person name="Johnson S."/>
            <person name="Tacon D."/>
            <person name="Jesse T."/>
            <person name="Heijnen L."/>
            <person name="Schwarz S."/>
            <person name="Scholler P."/>
            <person name="Heber S."/>
            <person name="Francs P."/>
            <person name="Bielke C."/>
            <person name="Frishman D."/>
            <person name="Haase D."/>
            <person name="Lemcke K."/>
            <person name="Mewes H.-W."/>
            <person name="Stocker S."/>
            <person name="Zaccaria P."/>
            <person name="Bevan M."/>
            <person name="Wilson R.K."/>
            <person name="de la Bastide M."/>
            <person name="Habermann K."/>
            <person name="Parnell L."/>
            <person name="Dedhia N."/>
            <person name="Gnoj L."/>
            <person name="Schutz K."/>
            <person name="Huang E."/>
            <person name="Spiegel L."/>
            <person name="Sekhon M."/>
            <person name="Murray J."/>
            <person name="Sheet P."/>
            <person name="Cordes M."/>
            <person name="Abu-Threideh J."/>
            <person name="Stoneking T."/>
            <person name="Kalicki J."/>
            <person name="Graves T."/>
            <person name="Harmon G."/>
            <person name="Edwards J."/>
            <person name="Latreille P."/>
            <person name="Courtney L."/>
            <person name="Cloud J."/>
            <person name="Abbott A."/>
            <person name="Scott K."/>
            <person name="Johnson D."/>
            <person name="Minx P."/>
            <person name="Bentley D."/>
            <person name="Fulton B."/>
            <person name="Miller N."/>
            <person name="Greco T."/>
            <person name="Kemp K."/>
            <person name="Kramer J."/>
            <person name="Fulton L."/>
            <person name="Mardis E."/>
            <person name="Dante M."/>
            <person name="Pepin K."/>
            <person name="Hillier L.W."/>
            <person name="Nelson J."/>
            <person name="Spieth J."/>
            <person name="Ryan E."/>
            <person name="Andrews S."/>
            <person name="Geisel C."/>
            <person name="Layman D."/>
            <person name="Du H."/>
            <person name="Ali J."/>
            <person name="Berghoff A."/>
            <person name="Jones K."/>
            <person name="Drone K."/>
            <person name="Cotton M."/>
            <person name="Joshu C."/>
            <person name="Antonoiu B."/>
            <person name="Zidanic M."/>
            <person name="Strong C."/>
            <person name="Sun H."/>
            <person name="Lamar B."/>
            <person name="Yordan C."/>
            <person name="Ma P."/>
            <person name="Zhong J."/>
            <person name="Preston R."/>
            <person name="Vil D."/>
            <person name="Shekher M."/>
            <person name="Matero A."/>
            <person name="Shah R."/>
            <person name="Swaby I.K."/>
            <person name="O'Shaughnessy A."/>
            <person name="Rodriguez M."/>
            <person name="Hoffman J."/>
            <person name="Till S."/>
            <person name="Granat S."/>
            <person name="Shohdy N."/>
            <person name="Hasegawa A."/>
            <person name="Hameed A."/>
            <person name="Lodhi M."/>
            <person name="Johnson A."/>
            <person name="Chen E."/>
            <person name="Marra M.A."/>
            <person name="Martienssen R."/>
            <person name="McCombie W.R."/>
        </authorList>
    </citation>
    <scope>NUCLEOTIDE SEQUENCE [LARGE SCALE GENOMIC DNA]</scope>
    <source>
        <strain>cv. Columbia</strain>
    </source>
</reference>
<reference key="2">
    <citation type="journal article" date="2017" name="Plant J.">
        <title>Araport11: a complete reannotation of the Arabidopsis thaliana reference genome.</title>
        <authorList>
            <person name="Cheng C.Y."/>
            <person name="Krishnakumar V."/>
            <person name="Chan A.P."/>
            <person name="Thibaud-Nissen F."/>
            <person name="Schobel S."/>
            <person name="Town C.D."/>
        </authorList>
    </citation>
    <scope>GENOME REANNOTATION</scope>
    <source>
        <strain>cv. Columbia</strain>
    </source>
</reference>
<reference key="3">
    <citation type="journal article" date="2003" name="Science">
        <title>Empirical analysis of transcriptional activity in the Arabidopsis genome.</title>
        <authorList>
            <person name="Yamada K."/>
            <person name="Lim J."/>
            <person name="Dale J.M."/>
            <person name="Chen H."/>
            <person name="Shinn P."/>
            <person name="Palm C.J."/>
            <person name="Southwick A.M."/>
            <person name="Wu H.C."/>
            <person name="Kim C.J."/>
            <person name="Nguyen M."/>
            <person name="Pham P.K."/>
            <person name="Cheuk R.F."/>
            <person name="Karlin-Newmann G."/>
            <person name="Liu S.X."/>
            <person name="Lam B."/>
            <person name="Sakano H."/>
            <person name="Wu T."/>
            <person name="Yu G."/>
            <person name="Miranda M."/>
            <person name="Quach H.L."/>
            <person name="Tripp M."/>
            <person name="Chang C.H."/>
            <person name="Lee J.M."/>
            <person name="Toriumi M.J."/>
            <person name="Chan M.M."/>
            <person name="Tang C.C."/>
            <person name="Onodera C.S."/>
            <person name="Deng J.M."/>
            <person name="Akiyama K."/>
            <person name="Ansari Y."/>
            <person name="Arakawa T."/>
            <person name="Banh J."/>
            <person name="Banno F."/>
            <person name="Bowser L."/>
            <person name="Brooks S.Y."/>
            <person name="Carninci P."/>
            <person name="Chao Q."/>
            <person name="Choy N."/>
            <person name="Enju A."/>
            <person name="Goldsmith A.D."/>
            <person name="Gurjal M."/>
            <person name="Hansen N.F."/>
            <person name="Hayashizaki Y."/>
            <person name="Johnson-Hopson C."/>
            <person name="Hsuan V.W."/>
            <person name="Iida K."/>
            <person name="Karnes M."/>
            <person name="Khan S."/>
            <person name="Koesema E."/>
            <person name="Ishida J."/>
            <person name="Jiang P.X."/>
            <person name="Jones T."/>
            <person name="Kawai J."/>
            <person name="Kamiya A."/>
            <person name="Meyers C."/>
            <person name="Nakajima M."/>
            <person name="Narusaka M."/>
            <person name="Seki M."/>
            <person name="Sakurai T."/>
            <person name="Satou M."/>
            <person name="Tamse R."/>
            <person name="Vaysberg M."/>
            <person name="Wallender E.K."/>
            <person name="Wong C."/>
            <person name="Yamamura Y."/>
            <person name="Yuan S."/>
            <person name="Shinozaki K."/>
            <person name="Davis R.W."/>
            <person name="Theologis A."/>
            <person name="Ecker J.R."/>
        </authorList>
    </citation>
    <scope>NUCLEOTIDE SEQUENCE [LARGE SCALE MRNA]</scope>
    <source>
        <strain>cv. Columbia</strain>
    </source>
</reference>
<reference key="4">
    <citation type="submission" date="2002-03" db="EMBL/GenBank/DDBJ databases">
        <title>Full-length cDNA from Arabidopsis thaliana.</title>
        <authorList>
            <person name="Brover V.V."/>
            <person name="Troukhan M.E."/>
            <person name="Alexandrov N.A."/>
            <person name="Lu Y.-P."/>
            <person name="Flavell R.B."/>
            <person name="Feldmann K.A."/>
        </authorList>
    </citation>
    <scope>NUCLEOTIDE SEQUENCE [LARGE SCALE MRNA]</scope>
</reference>
<reference key="5">
    <citation type="journal article" date="2004" name="Mol. Cell. Proteomics">
        <title>Identification of new intrinsic proteins in Arabidopsis plasma membrane proteome.</title>
        <authorList>
            <person name="Marmagne A."/>
            <person name="Rouet M.-A."/>
            <person name="Ferro M."/>
            <person name="Rolland N."/>
            <person name="Alcon C."/>
            <person name="Joyard J."/>
            <person name="Garin J."/>
            <person name="Barbier-Brygoo H."/>
            <person name="Ephritikhine G."/>
        </authorList>
    </citation>
    <scope>IDENTIFICATION BY MASS SPECTROMETRY</scope>
    <scope>SUBCELLULAR LOCATION</scope>
</reference>
<reference key="6">
    <citation type="journal article" date="2004" name="Plant Cell">
        <title>Plant proteins that interact with VirB2, the Agrobacterium tumefaciens pilin protein, mediate plant transformation.</title>
        <authorList>
            <person name="Hwang H.-H."/>
            <person name="Gelvin S.B."/>
        </authorList>
    </citation>
    <scope>FUNCTION</scope>
    <scope>INTERACTION WITH VIRB2</scope>
    <scope>INDUCTION</scope>
    <scope>TISSUE SPECIFICITY</scope>
    <scope>DISRUPTION PHENOTYPE</scope>
</reference>
<reference key="7">
    <citation type="journal article" date="2007" name="FEBS Lett.">
        <title>Reticulon-like proteins in Arabidopsis thaliana: structural organization and ER localization.</title>
        <authorList>
            <person name="Nziengui H."/>
            <person name="Bouhidel K."/>
            <person name="Pillon D."/>
            <person name="Der C."/>
            <person name="Marty F."/>
            <person name="Schoefs B."/>
        </authorList>
    </citation>
    <scope>GENE FAMILY</scope>
    <scope>NOMENCLATURE</scope>
</reference>
<reference key="8">
    <citation type="journal article" date="2009" name="Plant Physiol.">
        <title>Large-scale Arabidopsis phosphoproteome profiling reveals novel chloroplast kinase substrates and phosphorylation networks.</title>
        <authorList>
            <person name="Reiland S."/>
            <person name="Messerli G."/>
            <person name="Baerenfaller K."/>
            <person name="Gerrits B."/>
            <person name="Endler A."/>
            <person name="Grossmann J."/>
            <person name="Gruissem W."/>
            <person name="Baginsky S."/>
        </authorList>
    </citation>
    <scope>IDENTIFICATION BY MASS SPECTROMETRY [LARGE SCALE ANALYSIS]</scope>
</reference>
<organism>
    <name type="scientific">Arabidopsis thaliana</name>
    <name type="common">Mouse-ear cress</name>
    <dbReference type="NCBI Taxonomy" id="3702"/>
    <lineage>
        <taxon>Eukaryota</taxon>
        <taxon>Viridiplantae</taxon>
        <taxon>Streptophyta</taxon>
        <taxon>Embryophyta</taxon>
        <taxon>Tracheophyta</taxon>
        <taxon>Spermatophyta</taxon>
        <taxon>Magnoliopsida</taxon>
        <taxon>eudicotyledons</taxon>
        <taxon>Gunneridae</taxon>
        <taxon>Pentapetalae</taxon>
        <taxon>rosids</taxon>
        <taxon>malvids</taxon>
        <taxon>Brassicales</taxon>
        <taxon>Brassicaceae</taxon>
        <taxon>Camelineae</taxon>
        <taxon>Arabidopsis</taxon>
    </lineage>
</organism>
<name>RTNLA_ARATH</name>
<dbReference type="EMBL" id="AL035394">
    <property type="protein sequence ID" value="CAA23029.1"/>
    <property type="molecule type" value="Genomic_DNA"/>
</dbReference>
<dbReference type="EMBL" id="AL161559">
    <property type="protein sequence ID" value="CAB79318.1"/>
    <property type="molecule type" value="Genomic_DNA"/>
</dbReference>
<dbReference type="EMBL" id="CP002687">
    <property type="protein sequence ID" value="AEE84787.1"/>
    <property type="molecule type" value="Genomic_DNA"/>
</dbReference>
<dbReference type="EMBL" id="CP002687">
    <property type="protein sequence ID" value="ANM66145.1"/>
    <property type="molecule type" value="Genomic_DNA"/>
</dbReference>
<dbReference type="EMBL" id="AY050321">
    <property type="protein sequence ID" value="AAK91338.1"/>
    <property type="molecule type" value="mRNA"/>
</dbReference>
<dbReference type="EMBL" id="AY133635">
    <property type="protein sequence ID" value="AAM91465.1"/>
    <property type="molecule type" value="mRNA"/>
</dbReference>
<dbReference type="EMBL" id="AY087881">
    <property type="protein sequence ID" value="AAM65433.1"/>
    <property type="molecule type" value="mRNA"/>
</dbReference>
<dbReference type="PIR" id="T05595">
    <property type="entry name" value="T05595"/>
</dbReference>
<dbReference type="RefSeq" id="NP_001328059.1">
    <property type="nucleotide sequence ID" value="NM_001341623.1"/>
</dbReference>
<dbReference type="RefSeq" id="NP_194094.1">
    <property type="nucleotide sequence ID" value="NM_118494.5"/>
</dbReference>
<dbReference type="BioGRID" id="13752">
    <property type="interactions" value="6"/>
</dbReference>
<dbReference type="FunCoup" id="Q9SUR3">
    <property type="interactions" value="1186"/>
</dbReference>
<dbReference type="STRING" id="3702.Q9SUR3"/>
<dbReference type="iPTMnet" id="Q9SUR3"/>
<dbReference type="PaxDb" id="3702-AT4G23630.1"/>
<dbReference type="ProteomicsDB" id="228050"/>
<dbReference type="EnsemblPlants" id="AT4G23630.1">
    <property type="protein sequence ID" value="AT4G23630.1"/>
    <property type="gene ID" value="AT4G23630"/>
</dbReference>
<dbReference type="EnsemblPlants" id="AT4G23630.2">
    <property type="protein sequence ID" value="AT4G23630.2"/>
    <property type="gene ID" value="AT4G23630"/>
</dbReference>
<dbReference type="GeneID" id="828463"/>
<dbReference type="Gramene" id="AT4G23630.1">
    <property type="protein sequence ID" value="AT4G23630.1"/>
    <property type="gene ID" value="AT4G23630"/>
</dbReference>
<dbReference type="Gramene" id="AT4G23630.2">
    <property type="protein sequence ID" value="AT4G23630.2"/>
    <property type="gene ID" value="AT4G23630"/>
</dbReference>
<dbReference type="KEGG" id="ath:AT4G23630"/>
<dbReference type="Araport" id="AT4G23630"/>
<dbReference type="TAIR" id="AT4G23630">
    <property type="gene designation" value="BTI1"/>
</dbReference>
<dbReference type="eggNOG" id="KOG1792">
    <property type="taxonomic scope" value="Eukaryota"/>
</dbReference>
<dbReference type="HOGENOM" id="CLU_066344_1_0_1"/>
<dbReference type="InParanoid" id="Q9SUR3"/>
<dbReference type="OMA" id="WKCQAME"/>
<dbReference type="OrthoDB" id="567788at2759"/>
<dbReference type="PhylomeDB" id="Q9SUR3"/>
<dbReference type="PRO" id="PR:Q9SUR3"/>
<dbReference type="Proteomes" id="UP000006548">
    <property type="component" value="Chromosome 4"/>
</dbReference>
<dbReference type="ExpressionAtlas" id="Q9SUR3">
    <property type="expression patterns" value="baseline and differential"/>
</dbReference>
<dbReference type="GO" id="GO:0098554">
    <property type="term" value="C:cytoplasmic side of endoplasmic reticulum membrane"/>
    <property type="evidence" value="ECO:0000314"/>
    <property type="project" value="UniProtKB"/>
</dbReference>
<dbReference type="GO" id="GO:0005783">
    <property type="term" value="C:endoplasmic reticulum"/>
    <property type="evidence" value="ECO:0007005"/>
    <property type="project" value="TAIR"/>
</dbReference>
<dbReference type="GO" id="GO:0005789">
    <property type="term" value="C:endoplasmic reticulum membrane"/>
    <property type="evidence" value="ECO:0000314"/>
    <property type="project" value="TAIR"/>
</dbReference>
<dbReference type="GO" id="GO:0071782">
    <property type="term" value="C:endoplasmic reticulum tubular network"/>
    <property type="evidence" value="ECO:0000314"/>
    <property type="project" value="UniProtKB"/>
</dbReference>
<dbReference type="GO" id="GO:0000325">
    <property type="term" value="C:plant-type vacuole"/>
    <property type="evidence" value="ECO:0007005"/>
    <property type="project" value="TAIR"/>
</dbReference>
<dbReference type="GO" id="GO:0005886">
    <property type="term" value="C:plasma membrane"/>
    <property type="evidence" value="ECO:0007005"/>
    <property type="project" value="TAIR"/>
</dbReference>
<dbReference type="GO" id="GO:0071786">
    <property type="term" value="P:endoplasmic reticulum tubular network organization"/>
    <property type="evidence" value="ECO:0000315"/>
    <property type="project" value="UniProtKB"/>
</dbReference>
<dbReference type="GO" id="GO:0009617">
    <property type="term" value="P:response to bacterium"/>
    <property type="evidence" value="ECO:0000315"/>
    <property type="project" value="TAIR"/>
</dbReference>
<dbReference type="InterPro" id="IPR003388">
    <property type="entry name" value="Reticulon"/>
</dbReference>
<dbReference type="InterPro" id="IPR045064">
    <property type="entry name" value="Reticulon-like"/>
</dbReference>
<dbReference type="PANTHER" id="PTHR10994">
    <property type="entry name" value="RETICULON"/>
    <property type="match status" value="1"/>
</dbReference>
<dbReference type="PANTHER" id="PTHR10994:SF143">
    <property type="entry name" value="RETICULON-LIKE PROTEIN B1"/>
    <property type="match status" value="1"/>
</dbReference>
<dbReference type="Pfam" id="PF02453">
    <property type="entry name" value="Reticulon"/>
    <property type="match status" value="1"/>
</dbReference>
<dbReference type="PROSITE" id="PS50845">
    <property type="entry name" value="RETICULON"/>
    <property type="match status" value="1"/>
</dbReference>
<feature type="initiator methionine" description="Removed" evidence="1">
    <location>
        <position position="1"/>
    </location>
</feature>
<feature type="chain" id="PRO_0000371282" description="Reticulon-like protein B1">
    <location>
        <begin position="2"/>
        <end position="275"/>
    </location>
</feature>
<feature type="transmembrane region" description="Helical" evidence="3">
    <location>
        <begin position="99"/>
        <end position="119"/>
    </location>
</feature>
<feature type="transmembrane region" description="Helical" evidence="3">
    <location>
        <begin position="120"/>
        <end position="140"/>
    </location>
</feature>
<feature type="transmembrane region" description="Helical" evidence="3">
    <location>
        <begin position="194"/>
        <end position="214"/>
    </location>
</feature>
<feature type="domain" description="Reticulon" evidence="4">
    <location>
        <begin position="89"/>
        <end position="274"/>
    </location>
</feature>
<feature type="region of interest" description="Disordered" evidence="5">
    <location>
        <begin position="1"/>
        <end position="68"/>
    </location>
</feature>
<feature type="compositionally biased region" description="Basic and acidic residues" evidence="5">
    <location>
        <begin position="1"/>
        <end position="10"/>
    </location>
</feature>
<feature type="compositionally biased region" description="Basic and acidic residues" evidence="5">
    <location>
        <begin position="20"/>
        <end position="38"/>
    </location>
</feature>
<feature type="compositionally biased region" description="Low complexity" evidence="5">
    <location>
        <begin position="59"/>
        <end position="68"/>
    </location>
</feature>
<feature type="modified residue" description="N-acetylalanine" evidence="1">
    <location>
        <position position="2"/>
    </location>
</feature>
<proteinExistence type="evidence at protein level"/>